<reference key="1">
    <citation type="journal article" date="2005" name="J. Bacteriol.">
        <title>Insights on evolution of virulence and resistance from the complete genome analysis of an early methicillin-resistant Staphylococcus aureus strain and a biofilm-producing methicillin-resistant Staphylococcus epidermidis strain.</title>
        <authorList>
            <person name="Gill S.R."/>
            <person name="Fouts D.E."/>
            <person name="Archer G.L."/>
            <person name="Mongodin E.F."/>
            <person name="DeBoy R.T."/>
            <person name="Ravel J."/>
            <person name="Paulsen I.T."/>
            <person name="Kolonay J.F."/>
            <person name="Brinkac L.M."/>
            <person name="Beanan M.J."/>
            <person name="Dodson R.J."/>
            <person name="Daugherty S.C."/>
            <person name="Madupu R."/>
            <person name="Angiuoli S.V."/>
            <person name="Durkin A.S."/>
            <person name="Haft D.H."/>
            <person name="Vamathevan J.J."/>
            <person name="Khouri H."/>
            <person name="Utterback T.R."/>
            <person name="Lee C."/>
            <person name="Dimitrov G."/>
            <person name="Jiang L."/>
            <person name="Qin H."/>
            <person name="Weidman J."/>
            <person name="Tran K."/>
            <person name="Kang K.H."/>
            <person name="Hance I.R."/>
            <person name="Nelson K.E."/>
            <person name="Fraser C.M."/>
        </authorList>
    </citation>
    <scope>NUCLEOTIDE SEQUENCE [LARGE SCALE GENOMIC DNA]</scope>
    <source>
        <strain>ATCC 35984 / DSM 28319 / BCRC 17069 / CCUG 31568 / BM 3577 / RP62A</strain>
    </source>
</reference>
<comment type="function">
    <text evidence="1">Catalyzes the reversible conversion of 2-phosphoglycerate (2-PG) into phosphoenolpyruvate (PEP). It is essential for the degradation of carbohydrates via glycolysis.</text>
</comment>
<comment type="catalytic activity">
    <reaction evidence="1">
        <text>(2R)-2-phosphoglycerate = phosphoenolpyruvate + H2O</text>
        <dbReference type="Rhea" id="RHEA:10164"/>
        <dbReference type="ChEBI" id="CHEBI:15377"/>
        <dbReference type="ChEBI" id="CHEBI:58289"/>
        <dbReference type="ChEBI" id="CHEBI:58702"/>
        <dbReference type="EC" id="4.2.1.11"/>
    </reaction>
</comment>
<comment type="cofactor">
    <cofactor evidence="1">
        <name>Mg(2+)</name>
        <dbReference type="ChEBI" id="CHEBI:18420"/>
    </cofactor>
    <text evidence="1">Binds a second Mg(2+) ion via substrate during catalysis.</text>
</comment>
<comment type="pathway">
    <text evidence="1">Carbohydrate degradation; glycolysis; pyruvate from D-glyceraldehyde 3-phosphate: step 4/5.</text>
</comment>
<comment type="subcellular location">
    <subcellularLocation>
        <location evidence="1">Cytoplasm</location>
    </subcellularLocation>
    <subcellularLocation>
        <location evidence="1">Secreted</location>
    </subcellularLocation>
    <subcellularLocation>
        <location evidence="1">Cell surface</location>
    </subcellularLocation>
    <text evidence="1">Fractions of enolase are present in both the cytoplasm and on the cell surface.</text>
</comment>
<comment type="similarity">
    <text evidence="1">Belongs to the enolase family.</text>
</comment>
<protein>
    <recommendedName>
        <fullName evidence="1">Enolase</fullName>
        <ecNumber evidence="1">4.2.1.11</ecNumber>
    </recommendedName>
    <alternativeName>
        <fullName evidence="1">2-phospho-D-glycerate hydro-lyase</fullName>
    </alternativeName>
    <alternativeName>
        <fullName evidence="1">2-phosphoglycerate dehydratase</fullName>
    </alternativeName>
</protein>
<feature type="chain" id="PRO_0000133972" description="Enolase">
    <location>
        <begin position="1"/>
        <end position="434"/>
    </location>
</feature>
<feature type="active site" description="Proton donor" evidence="1">
    <location>
        <position position="207"/>
    </location>
</feature>
<feature type="active site" description="Proton acceptor" evidence="1">
    <location>
        <position position="343"/>
    </location>
</feature>
<feature type="binding site" evidence="1">
    <location>
        <position position="165"/>
    </location>
    <ligand>
        <name>(2R)-2-phosphoglycerate</name>
        <dbReference type="ChEBI" id="CHEBI:58289"/>
    </ligand>
</feature>
<feature type="binding site" evidence="1">
    <location>
        <position position="244"/>
    </location>
    <ligand>
        <name>Mg(2+)</name>
        <dbReference type="ChEBI" id="CHEBI:18420"/>
    </ligand>
</feature>
<feature type="binding site" evidence="1">
    <location>
        <position position="291"/>
    </location>
    <ligand>
        <name>Mg(2+)</name>
        <dbReference type="ChEBI" id="CHEBI:18420"/>
    </ligand>
</feature>
<feature type="binding site" evidence="1">
    <location>
        <position position="318"/>
    </location>
    <ligand>
        <name>Mg(2+)</name>
        <dbReference type="ChEBI" id="CHEBI:18420"/>
    </ligand>
</feature>
<feature type="binding site" evidence="1">
    <location>
        <position position="343"/>
    </location>
    <ligand>
        <name>(2R)-2-phosphoglycerate</name>
        <dbReference type="ChEBI" id="CHEBI:58289"/>
    </ligand>
</feature>
<feature type="binding site" evidence="1">
    <location>
        <position position="372"/>
    </location>
    <ligand>
        <name>(2R)-2-phosphoglycerate</name>
        <dbReference type="ChEBI" id="CHEBI:58289"/>
    </ligand>
</feature>
<feature type="binding site" evidence="1">
    <location>
        <position position="373"/>
    </location>
    <ligand>
        <name>(2R)-2-phosphoglycerate</name>
        <dbReference type="ChEBI" id="CHEBI:58289"/>
    </ligand>
</feature>
<feature type="binding site" evidence="1">
    <location>
        <position position="394"/>
    </location>
    <ligand>
        <name>(2R)-2-phosphoglycerate</name>
        <dbReference type="ChEBI" id="CHEBI:58289"/>
    </ligand>
</feature>
<organism>
    <name type="scientific">Staphylococcus epidermidis (strain ATCC 35984 / DSM 28319 / BCRC 17069 / CCUG 31568 / BM 3577 / RP62A)</name>
    <dbReference type="NCBI Taxonomy" id="176279"/>
    <lineage>
        <taxon>Bacteria</taxon>
        <taxon>Bacillati</taxon>
        <taxon>Bacillota</taxon>
        <taxon>Bacilli</taxon>
        <taxon>Bacillales</taxon>
        <taxon>Staphylococcaceae</taxon>
        <taxon>Staphylococcus</taxon>
    </lineage>
</organism>
<sequence>MPIITDVYAREVLDSRGNPTVEVEVLTESGAFGRALVPSGASTGEHEAVELRDGDKSRYLGKGVTKAVENVNEMIAPEIVEGEFSVLDQVSIDKMMIQLDGTHNKGKLGANAILGVSIAVARAAADLLGQPLYKYLGGFNGKQLPVPMMNIVNGGSHSDAPIAFQEFMILPVGAESFKESLRWGAEIFHNLKSILSERGLETAVGDEGGFAPRFEGTEDAVETIIKAIEKAGYKPGEDVFLGFDCASSEFYENGVYDYTKFEGEHGAKRSAAEQVDYLEELIGKYPIITIEDGMDENDWEGWKQLTDRIGDKVQLVGDDLFVTNTEILSKGIEQGIGNSILIKVNQIGTLTETFDAIEMAQKAGYTAVVSHRSGETEDTTIADIAVATNAGQIKTGSLSRTDRIAKYNQLLRIEDELYETAKFEGIKSFYNLDK</sequence>
<dbReference type="EC" id="4.2.1.11" evidence="1"/>
<dbReference type="EMBL" id="CP000029">
    <property type="protein sequence ID" value="AAW53886.1"/>
    <property type="molecule type" value="Genomic_DNA"/>
</dbReference>
<dbReference type="RefSeq" id="WP_001829595.1">
    <property type="nucleotide sequence ID" value="NC_002976.3"/>
</dbReference>
<dbReference type="SMR" id="Q5HQV0"/>
<dbReference type="STRING" id="176279.SERP0446"/>
<dbReference type="GeneID" id="50019291"/>
<dbReference type="KEGG" id="ser:SERP0446"/>
<dbReference type="eggNOG" id="COG0148">
    <property type="taxonomic scope" value="Bacteria"/>
</dbReference>
<dbReference type="HOGENOM" id="CLU_031223_2_1_9"/>
<dbReference type="UniPathway" id="UPA00109">
    <property type="reaction ID" value="UER00187"/>
</dbReference>
<dbReference type="Proteomes" id="UP000000531">
    <property type="component" value="Chromosome"/>
</dbReference>
<dbReference type="GO" id="GO:0009986">
    <property type="term" value="C:cell surface"/>
    <property type="evidence" value="ECO:0007669"/>
    <property type="project" value="UniProtKB-SubCell"/>
</dbReference>
<dbReference type="GO" id="GO:0005576">
    <property type="term" value="C:extracellular region"/>
    <property type="evidence" value="ECO:0007669"/>
    <property type="project" value="UniProtKB-SubCell"/>
</dbReference>
<dbReference type="GO" id="GO:0000015">
    <property type="term" value="C:phosphopyruvate hydratase complex"/>
    <property type="evidence" value="ECO:0007669"/>
    <property type="project" value="InterPro"/>
</dbReference>
<dbReference type="GO" id="GO:0000287">
    <property type="term" value="F:magnesium ion binding"/>
    <property type="evidence" value="ECO:0007669"/>
    <property type="project" value="UniProtKB-UniRule"/>
</dbReference>
<dbReference type="GO" id="GO:0004634">
    <property type="term" value="F:phosphopyruvate hydratase activity"/>
    <property type="evidence" value="ECO:0007669"/>
    <property type="project" value="UniProtKB-UniRule"/>
</dbReference>
<dbReference type="GO" id="GO:0006096">
    <property type="term" value="P:glycolytic process"/>
    <property type="evidence" value="ECO:0007669"/>
    <property type="project" value="UniProtKB-UniRule"/>
</dbReference>
<dbReference type="CDD" id="cd03313">
    <property type="entry name" value="enolase"/>
    <property type="match status" value="1"/>
</dbReference>
<dbReference type="FunFam" id="3.20.20.120:FF:000001">
    <property type="entry name" value="Enolase"/>
    <property type="match status" value="1"/>
</dbReference>
<dbReference type="FunFam" id="3.30.390.10:FF:000001">
    <property type="entry name" value="Enolase"/>
    <property type="match status" value="1"/>
</dbReference>
<dbReference type="Gene3D" id="3.20.20.120">
    <property type="entry name" value="Enolase-like C-terminal domain"/>
    <property type="match status" value="1"/>
</dbReference>
<dbReference type="Gene3D" id="3.30.390.10">
    <property type="entry name" value="Enolase-like, N-terminal domain"/>
    <property type="match status" value="1"/>
</dbReference>
<dbReference type="HAMAP" id="MF_00318">
    <property type="entry name" value="Enolase"/>
    <property type="match status" value="1"/>
</dbReference>
<dbReference type="InterPro" id="IPR000941">
    <property type="entry name" value="Enolase"/>
</dbReference>
<dbReference type="InterPro" id="IPR036849">
    <property type="entry name" value="Enolase-like_C_sf"/>
</dbReference>
<dbReference type="InterPro" id="IPR029017">
    <property type="entry name" value="Enolase-like_N"/>
</dbReference>
<dbReference type="InterPro" id="IPR020810">
    <property type="entry name" value="Enolase_C"/>
</dbReference>
<dbReference type="InterPro" id="IPR020809">
    <property type="entry name" value="Enolase_CS"/>
</dbReference>
<dbReference type="InterPro" id="IPR020811">
    <property type="entry name" value="Enolase_N"/>
</dbReference>
<dbReference type="NCBIfam" id="TIGR01060">
    <property type="entry name" value="eno"/>
    <property type="match status" value="1"/>
</dbReference>
<dbReference type="PANTHER" id="PTHR11902">
    <property type="entry name" value="ENOLASE"/>
    <property type="match status" value="1"/>
</dbReference>
<dbReference type="PANTHER" id="PTHR11902:SF1">
    <property type="entry name" value="ENOLASE"/>
    <property type="match status" value="1"/>
</dbReference>
<dbReference type="Pfam" id="PF00113">
    <property type="entry name" value="Enolase_C"/>
    <property type="match status" value="1"/>
</dbReference>
<dbReference type="Pfam" id="PF03952">
    <property type="entry name" value="Enolase_N"/>
    <property type="match status" value="1"/>
</dbReference>
<dbReference type="PIRSF" id="PIRSF001400">
    <property type="entry name" value="Enolase"/>
    <property type="match status" value="1"/>
</dbReference>
<dbReference type="PRINTS" id="PR00148">
    <property type="entry name" value="ENOLASE"/>
</dbReference>
<dbReference type="SFLD" id="SFLDS00001">
    <property type="entry name" value="Enolase"/>
    <property type="match status" value="1"/>
</dbReference>
<dbReference type="SFLD" id="SFLDF00002">
    <property type="entry name" value="enolase"/>
    <property type="match status" value="1"/>
</dbReference>
<dbReference type="SMART" id="SM01192">
    <property type="entry name" value="Enolase_C"/>
    <property type="match status" value="1"/>
</dbReference>
<dbReference type="SMART" id="SM01193">
    <property type="entry name" value="Enolase_N"/>
    <property type="match status" value="1"/>
</dbReference>
<dbReference type="SUPFAM" id="SSF51604">
    <property type="entry name" value="Enolase C-terminal domain-like"/>
    <property type="match status" value="1"/>
</dbReference>
<dbReference type="SUPFAM" id="SSF54826">
    <property type="entry name" value="Enolase N-terminal domain-like"/>
    <property type="match status" value="1"/>
</dbReference>
<dbReference type="PROSITE" id="PS00164">
    <property type="entry name" value="ENOLASE"/>
    <property type="match status" value="1"/>
</dbReference>
<evidence type="ECO:0000255" key="1">
    <source>
        <dbReference type="HAMAP-Rule" id="MF_00318"/>
    </source>
</evidence>
<keyword id="KW-0963">Cytoplasm</keyword>
<keyword id="KW-0324">Glycolysis</keyword>
<keyword id="KW-0456">Lyase</keyword>
<keyword id="KW-0460">Magnesium</keyword>
<keyword id="KW-0479">Metal-binding</keyword>
<keyword id="KW-1185">Reference proteome</keyword>
<keyword id="KW-0964">Secreted</keyword>
<accession>Q5HQV0</accession>
<proteinExistence type="inferred from homology"/>
<name>ENO_STAEQ</name>
<gene>
    <name evidence="1" type="primary">eno</name>
    <name type="ordered locus">SERP0446</name>
</gene>